<name>NU4LM_CALMU</name>
<protein>
    <recommendedName>
        <fullName>NADH-ubiquinone oxidoreductase chain 4L</fullName>
        <ecNumber>7.1.1.2</ecNumber>
    </recommendedName>
    <alternativeName>
        <fullName>NADH dehydrogenase subunit 4L</fullName>
    </alternativeName>
</protein>
<sequence>MTQASTNILLAFFFSLLGTLIFRSHLMSTLLCLEGMMLTLFIMSTMTALNSQSTVMYTIPIVMLVFAACEAAIGLALLAMISNTYGTDYVQNLNLLQC</sequence>
<dbReference type="EC" id="7.1.1.2"/>
<dbReference type="EMBL" id="U83817">
    <property type="protein sequence ID" value="AAB87173.1"/>
    <property type="molecule type" value="Genomic_DNA"/>
</dbReference>
<dbReference type="SMR" id="Q7GF83"/>
<dbReference type="GO" id="GO:0005743">
    <property type="term" value="C:mitochondrial inner membrane"/>
    <property type="evidence" value="ECO:0000250"/>
    <property type="project" value="UniProtKB"/>
</dbReference>
<dbReference type="GO" id="GO:0045271">
    <property type="term" value="C:respiratory chain complex I"/>
    <property type="evidence" value="ECO:0000250"/>
    <property type="project" value="UniProtKB"/>
</dbReference>
<dbReference type="GO" id="GO:0008137">
    <property type="term" value="F:NADH dehydrogenase (ubiquinone) activity"/>
    <property type="evidence" value="ECO:0000250"/>
    <property type="project" value="UniProtKB"/>
</dbReference>
<dbReference type="GO" id="GO:0042773">
    <property type="term" value="P:ATP synthesis coupled electron transport"/>
    <property type="evidence" value="ECO:0007669"/>
    <property type="project" value="InterPro"/>
</dbReference>
<dbReference type="FunFam" id="1.10.287.3510:FF:000002">
    <property type="entry name" value="NADH-ubiquinone oxidoreductase chain 4L"/>
    <property type="match status" value="1"/>
</dbReference>
<dbReference type="Gene3D" id="1.10.287.3510">
    <property type="match status" value="1"/>
</dbReference>
<dbReference type="InterPro" id="IPR001133">
    <property type="entry name" value="NADH_UbQ_OxRdtase_chain4L/K"/>
</dbReference>
<dbReference type="InterPro" id="IPR039428">
    <property type="entry name" value="NUOK/Mnh_C1-like"/>
</dbReference>
<dbReference type="PANTHER" id="PTHR11434:SF0">
    <property type="entry name" value="NADH-UBIQUINONE OXIDOREDUCTASE CHAIN 4L"/>
    <property type="match status" value="1"/>
</dbReference>
<dbReference type="PANTHER" id="PTHR11434">
    <property type="entry name" value="NADH-UBIQUINONE OXIDOREDUCTASE SUBUNIT ND4L"/>
    <property type="match status" value="1"/>
</dbReference>
<dbReference type="Pfam" id="PF00420">
    <property type="entry name" value="Oxidored_q2"/>
    <property type="match status" value="1"/>
</dbReference>
<feature type="chain" id="PRO_0000257866" description="NADH-ubiquinone oxidoreductase chain 4L">
    <location>
        <begin position="1"/>
        <end position="98"/>
    </location>
</feature>
<feature type="transmembrane region" description="Helical" evidence="3">
    <location>
        <begin position="2"/>
        <end position="22"/>
    </location>
</feature>
<feature type="transmembrane region" description="Helical" evidence="3">
    <location>
        <begin position="29"/>
        <end position="49"/>
    </location>
</feature>
<feature type="transmembrane region" description="Helical" evidence="3">
    <location>
        <begin position="61"/>
        <end position="81"/>
    </location>
</feature>
<keyword id="KW-0249">Electron transport</keyword>
<keyword id="KW-0472">Membrane</keyword>
<keyword id="KW-0496">Mitochondrion</keyword>
<keyword id="KW-0999">Mitochondrion inner membrane</keyword>
<keyword id="KW-0520">NAD</keyword>
<keyword id="KW-0679">Respiratory chain</keyword>
<keyword id="KW-1278">Translocase</keyword>
<keyword id="KW-0812">Transmembrane</keyword>
<keyword id="KW-1133">Transmembrane helix</keyword>
<keyword id="KW-0813">Transport</keyword>
<keyword id="KW-0830">Ubiquinone</keyword>
<reference key="1">
    <citation type="journal article" date="1998" name="Mol. Biol. Evol.">
        <title>Molecular systematics and paleobiogeography of the South American sigmodontine rodents.</title>
        <authorList>
            <person name="Engel S.R."/>
            <person name="Hogan K.M."/>
            <person name="Taylor J.F."/>
            <person name="Davis S.K."/>
        </authorList>
    </citation>
    <scope>NUCLEOTIDE SEQUENCE [GENOMIC DNA]</scope>
</reference>
<comment type="function">
    <text evidence="1">Core subunit of the mitochondrial membrane respiratory chain NADH dehydrogenase (Complex I) which catalyzes electron transfer from NADH through the respiratory chain, using ubiquinone as an electron acceptor. Part of the enzyme membrane arm which is embedded in the lipid bilayer and involved in proton translocation.</text>
</comment>
<comment type="catalytic activity">
    <reaction evidence="1">
        <text>a ubiquinone + NADH + 5 H(+)(in) = a ubiquinol + NAD(+) + 4 H(+)(out)</text>
        <dbReference type="Rhea" id="RHEA:29091"/>
        <dbReference type="Rhea" id="RHEA-COMP:9565"/>
        <dbReference type="Rhea" id="RHEA-COMP:9566"/>
        <dbReference type="ChEBI" id="CHEBI:15378"/>
        <dbReference type="ChEBI" id="CHEBI:16389"/>
        <dbReference type="ChEBI" id="CHEBI:17976"/>
        <dbReference type="ChEBI" id="CHEBI:57540"/>
        <dbReference type="ChEBI" id="CHEBI:57945"/>
        <dbReference type="EC" id="7.1.1.2"/>
    </reaction>
    <physiologicalReaction direction="left-to-right" evidence="1">
        <dbReference type="Rhea" id="RHEA:29092"/>
    </physiologicalReaction>
</comment>
<comment type="subunit">
    <text evidence="2">Core subunit of respiratory chain NADH dehydrogenase (Complex I) which is composed of 45 different subunits.</text>
</comment>
<comment type="subcellular location">
    <subcellularLocation>
        <location evidence="2">Mitochondrion inner membrane</location>
        <topology evidence="3">Multi-pass membrane protein</topology>
    </subcellularLocation>
</comment>
<comment type="similarity">
    <text evidence="4">Belongs to the complex I subunit 4L family.</text>
</comment>
<proteinExistence type="inferred from homology"/>
<gene>
    <name type="primary">MT-ND4L</name>
    <name type="synonym">MTND4L</name>
    <name type="synonym">NADH4L</name>
    <name type="synonym">ND4L</name>
</gene>
<evidence type="ECO:0000250" key="1">
    <source>
        <dbReference type="UniProtKB" id="P03901"/>
    </source>
</evidence>
<evidence type="ECO:0000250" key="2">
    <source>
        <dbReference type="UniProtKB" id="P03902"/>
    </source>
</evidence>
<evidence type="ECO:0000255" key="3"/>
<evidence type="ECO:0000305" key="4"/>
<geneLocation type="mitochondrion"/>
<organism>
    <name type="scientific">Calomys musculinus</name>
    <name type="common">Drylands vesper mouse</name>
    <dbReference type="NCBI Taxonomy" id="56212"/>
    <lineage>
        <taxon>Eukaryota</taxon>
        <taxon>Metazoa</taxon>
        <taxon>Chordata</taxon>
        <taxon>Craniata</taxon>
        <taxon>Vertebrata</taxon>
        <taxon>Euteleostomi</taxon>
        <taxon>Mammalia</taxon>
        <taxon>Eutheria</taxon>
        <taxon>Euarchontoglires</taxon>
        <taxon>Glires</taxon>
        <taxon>Rodentia</taxon>
        <taxon>Myomorpha</taxon>
        <taxon>Muroidea</taxon>
        <taxon>Cricetidae</taxon>
        <taxon>Sigmodontinae</taxon>
        <taxon>Calomys</taxon>
    </lineage>
</organism>
<accession>Q7GF83</accession>